<evidence type="ECO:0000255" key="1">
    <source>
        <dbReference type="HAMAP-Rule" id="MF_00255"/>
    </source>
</evidence>
<accession>B2UUB6</accession>
<reference key="1">
    <citation type="submission" date="2008-05" db="EMBL/GenBank/DDBJ databases">
        <title>Genome sequence of Helicobacter pylori from the remote Amazon: traces of Asian ancestry of the first Americans.</title>
        <authorList>
            <person name="Kersulyte D."/>
            <person name="Kalia A."/>
            <person name="Gilman R.H."/>
            <person name="Berg D.E."/>
        </authorList>
    </citation>
    <scope>NUCLEOTIDE SEQUENCE [LARGE SCALE GENOMIC DNA]</scope>
    <source>
        <strain>Shi470</strain>
    </source>
</reference>
<sequence>MHSDELLVEILVEELPAQALLNEYKEMPKKLHALFNKRALEVGKIEIFYTPRRLCLLVKDFPLLTQETKEEFFGPPVKIACNHQDKTQGLNELGLGFYQKLGLKDHQHFQTAFKNNNEVLYHAKIHAKEPTKDLIMPIVLEFLEGLNFGKSMRWGNVEKSFIRPIHNICVLFNGENFNDIEVKEYGFKTKQATKAHRQEGFDFIQVDSPKAYFEVLEKNHVILDPKKRKAKILQEIKELETKHRIIVEIDRDLLDEVVAITEYPSALLGEFDKAFLKLPNEIIITSMKENQRYFAAFNQKSQESPTLHNGFIVVSNAISKDKQKIIAGNQKVLKARLSDAVFFYENDLKKPLDNAPLESVVFVQGLGTLKDKMEREAIIAQYLTQKYASSLNMPLEKALELVGRAVRIAKADLLSEVVYEFSELQGIMGYYYALKQNENELVALSVKEQYLPASENAPLPSSVFSAIVALSLKLDSLFSLFSVGKIPSGSKDPFALRRLSFGLLKIVVHYGLEFDLKADLKNLFEKVGVYQSFDLEVLEKFLLERFNNLIDCNPSIIRSVLNTNERGIVKIIQKVKALKRFLDDPKNAQKKELLFSAFKRLANINKDRNPNESSEFFISLFKESQEHALFEAFNAIKTSTFESLDSKIEAYFGLHAPLEEYFKSVLVMDKDIEIQKNRKNFLWGVYQSFLEIGDIKEIAI</sequence>
<name>SYGB_HELPS</name>
<organism>
    <name type="scientific">Helicobacter pylori (strain Shi470)</name>
    <dbReference type="NCBI Taxonomy" id="512562"/>
    <lineage>
        <taxon>Bacteria</taxon>
        <taxon>Pseudomonadati</taxon>
        <taxon>Campylobacterota</taxon>
        <taxon>Epsilonproteobacteria</taxon>
        <taxon>Campylobacterales</taxon>
        <taxon>Helicobacteraceae</taxon>
        <taxon>Helicobacter</taxon>
    </lineage>
</organism>
<protein>
    <recommendedName>
        <fullName evidence="1">Glycine--tRNA ligase beta subunit</fullName>
        <ecNumber evidence="1">6.1.1.14</ecNumber>
    </recommendedName>
    <alternativeName>
        <fullName evidence="1">Glycyl-tRNA synthetase beta subunit</fullName>
        <shortName evidence="1">GlyRS</shortName>
    </alternativeName>
</protein>
<keyword id="KW-0030">Aminoacyl-tRNA synthetase</keyword>
<keyword id="KW-0067">ATP-binding</keyword>
<keyword id="KW-0963">Cytoplasm</keyword>
<keyword id="KW-0436">Ligase</keyword>
<keyword id="KW-0547">Nucleotide-binding</keyword>
<keyword id="KW-0648">Protein biosynthesis</keyword>
<dbReference type="EC" id="6.1.1.14" evidence="1"/>
<dbReference type="EMBL" id="CP001072">
    <property type="protein sequence ID" value="ACD48448.1"/>
    <property type="molecule type" value="Genomic_DNA"/>
</dbReference>
<dbReference type="RefSeq" id="WP_000555183.1">
    <property type="nucleotide sequence ID" value="NC_010698.2"/>
</dbReference>
<dbReference type="SMR" id="B2UUB6"/>
<dbReference type="KEGG" id="hps:HPSH_05135"/>
<dbReference type="HOGENOM" id="CLU_007220_2_2_7"/>
<dbReference type="GO" id="GO:0005829">
    <property type="term" value="C:cytosol"/>
    <property type="evidence" value="ECO:0007669"/>
    <property type="project" value="TreeGrafter"/>
</dbReference>
<dbReference type="GO" id="GO:0005524">
    <property type="term" value="F:ATP binding"/>
    <property type="evidence" value="ECO:0007669"/>
    <property type="project" value="UniProtKB-UniRule"/>
</dbReference>
<dbReference type="GO" id="GO:0004820">
    <property type="term" value="F:glycine-tRNA ligase activity"/>
    <property type="evidence" value="ECO:0007669"/>
    <property type="project" value="UniProtKB-UniRule"/>
</dbReference>
<dbReference type="GO" id="GO:0006426">
    <property type="term" value="P:glycyl-tRNA aminoacylation"/>
    <property type="evidence" value="ECO:0007669"/>
    <property type="project" value="UniProtKB-UniRule"/>
</dbReference>
<dbReference type="HAMAP" id="MF_00255">
    <property type="entry name" value="Gly_tRNA_synth_beta"/>
    <property type="match status" value="1"/>
</dbReference>
<dbReference type="InterPro" id="IPR015944">
    <property type="entry name" value="Gly-tRNA-synth_bsu"/>
</dbReference>
<dbReference type="InterPro" id="IPR006194">
    <property type="entry name" value="Gly-tRNA-synth_heterodimer"/>
</dbReference>
<dbReference type="NCBIfam" id="TIGR00211">
    <property type="entry name" value="glyS"/>
    <property type="match status" value="1"/>
</dbReference>
<dbReference type="PANTHER" id="PTHR30075:SF2">
    <property type="entry name" value="GLYCINE--TRNA LIGASE, CHLOROPLASTIC_MITOCHONDRIAL 2"/>
    <property type="match status" value="1"/>
</dbReference>
<dbReference type="PANTHER" id="PTHR30075">
    <property type="entry name" value="GLYCYL-TRNA SYNTHETASE"/>
    <property type="match status" value="1"/>
</dbReference>
<dbReference type="Pfam" id="PF02092">
    <property type="entry name" value="tRNA_synt_2f"/>
    <property type="match status" value="1"/>
</dbReference>
<dbReference type="PRINTS" id="PR01045">
    <property type="entry name" value="TRNASYNTHGB"/>
</dbReference>
<dbReference type="PROSITE" id="PS50861">
    <property type="entry name" value="AA_TRNA_LIGASE_II_GLYAB"/>
    <property type="match status" value="1"/>
</dbReference>
<feature type="chain" id="PRO_1000101285" description="Glycine--tRNA ligase beta subunit">
    <location>
        <begin position="1"/>
        <end position="700"/>
    </location>
</feature>
<gene>
    <name evidence="1" type="primary">glyS</name>
    <name type="ordered locus">HPSH_05135</name>
</gene>
<proteinExistence type="inferred from homology"/>
<comment type="catalytic activity">
    <reaction evidence="1">
        <text>tRNA(Gly) + glycine + ATP = glycyl-tRNA(Gly) + AMP + diphosphate</text>
        <dbReference type="Rhea" id="RHEA:16013"/>
        <dbReference type="Rhea" id="RHEA-COMP:9664"/>
        <dbReference type="Rhea" id="RHEA-COMP:9683"/>
        <dbReference type="ChEBI" id="CHEBI:30616"/>
        <dbReference type="ChEBI" id="CHEBI:33019"/>
        <dbReference type="ChEBI" id="CHEBI:57305"/>
        <dbReference type="ChEBI" id="CHEBI:78442"/>
        <dbReference type="ChEBI" id="CHEBI:78522"/>
        <dbReference type="ChEBI" id="CHEBI:456215"/>
        <dbReference type="EC" id="6.1.1.14"/>
    </reaction>
</comment>
<comment type="subunit">
    <text evidence="1">Tetramer of two alpha and two beta subunits.</text>
</comment>
<comment type="subcellular location">
    <subcellularLocation>
        <location evidence="1">Cytoplasm</location>
    </subcellularLocation>
</comment>
<comment type="similarity">
    <text evidence="1">Belongs to the class-II aminoacyl-tRNA synthetase family.</text>
</comment>